<gene>
    <name evidence="1" type="primary">tdcC</name>
    <name type="ordered locus">SBO_2981</name>
</gene>
<reference key="1">
    <citation type="journal article" date="2005" name="Nucleic Acids Res.">
        <title>Genome dynamics and diversity of Shigella species, the etiologic agents of bacillary dysentery.</title>
        <authorList>
            <person name="Yang F."/>
            <person name="Yang J."/>
            <person name="Zhang X."/>
            <person name="Chen L."/>
            <person name="Jiang Y."/>
            <person name="Yan Y."/>
            <person name="Tang X."/>
            <person name="Wang J."/>
            <person name="Xiong Z."/>
            <person name="Dong J."/>
            <person name="Xue Y."/>
            <person name="Zhu Y."/>
            <person name="Xu X."/>
            <person name="Sun L."/>
            <person name="Chen S."/>
            <person name="Nie H."/>
            <person name="Peng J."/>
            <person name="Xu J."/>
            <person name="Wang Y."/>
            <person name="Yuan Z."/>
            <person name="Wen Y."/>
            <person name="Yao Z."/>
            <person name="Shen Y."/>
            <person name="Qiang B."/>
            <person name="Hou Y."/>
            <person name="Yu J."/>
            <person name="Jin Q."/>
        </authorList>
    </citation>
    <scope>NUCLEOTIDE SEQUENCE [LARGE SCALE GENOMIC DNA]</scope>
    <source>
        <strain>Sb227</strain>
    </source>
</reference>
<protein>
    <recommendedName>
        <fullName evidence="1">Threonine/serine transporter TdcC</fullName>
    </recommendedName>
    <alternativeName>
        <fullName evidence="1">H(+)/threonine-serine symporter</fullName>
    </alternativeName>
</protein>
<accession>Q31WR5</accession>
<name>TDCC_SHIBS</name>
<evidence type="ECO:0000255" key="1">
    <source>
        <dbReference type="HAMAP-Rule" id="MF_01583"/>
    </source>
</evidence>
<comment type="function">
    <text evidence="1">Involved in the import of threonine and serine into the cell, with the concomitant import of a proton (symport system).</text>
</comment>
<comment type="catalytic activity">
    <reaction evidence="1">
        <text>L-threonine(in) + H(+)(in) = L-threonine(out) + H(+)(out)</text>
        <dbReference type="Rhea" id="RHEA:28883"/>
        <dbReference type="ChEBI" id="CHEBI:15378"/>
        <dbReference type="ChEBI" id="CHEBI:57926"/>
    </reaction>
    <physiologicalReaction direction="right-to-left" evidence="1">
        <dbReference type="Rhea" id="RHEA:28885"/>
    </physiologicalReaction>
</comment>
<comment type="catalytic activity">
    <reaction evidence="1">
        <text>L-serine(in) + H(+)(in) = L-serine(out) + H(+)(out)</text>
        <dbReference type="Rhea" id="RHEA:28887"/>
        <dbReference type="ChEBI" id="CHEBI:15378"/>
        <dbReference type="ChEBI" id="CHEBI:33384"/>
    </reaction>
    <physiologicalReaction direction="right-to-left" evidence="1">
        <dbReference type="Rhea" id="RHEA:28889"/>
    </physiologicalReaction>
</comment>
<comment type="subcellular location">
    <subcellularLocation>
        <location evidence="1">Cell inner membrane</location>
        <topology evidence="1">Multi-pass membrane protein</topology>
    </subcellularLocation>
</comment>
<comment type="similarity">
    <text evidence="1">Belongs to the amino acid/polyamine transporter 2 family. SdaC/TdcC subfamily.</text>
</comment>
<keyword id="KW-0029">Amino-acid transport</keyword>
<keyword id="KW-0997">Cell inner membrane</keyword>
<keyword id="KW-1003">Cell membrane</keyword>
<keyword id="KW-0472">Membrane</keyword>
<keyword id="KW-0769">Symport</keyword>
<keyword id="KW-0812">Transmembrane</keyword>
<keyword id="KW-1133">Transmembrane helix</keyword>
<keyword id="KW-0813">Transport</keyword>
<dbReference type="EMBL" id="CP000036">
    <property type="protein sequence ID" value="ABB67493.1"/>
    <property type="molecule type" value="Genomic_DNA"/>
</dbReference>
<dbReference type="RefSeq" id="WP_000107720.1">
    <property type="nucleotide sequence ID" value="NC_007613.1"/>
</dbReference>
<dbReference type="SMR" id="Q31WR5"/>
<dbReference type="GeneID" id="75205075"/>
<dbReference type="KEGG" id="sbo:SBO_2981"/>
<dbReference type="HOGENOM" id="CLU_052043_1_1_6"/>
<dbReference type="Proteomes" id="UP000007067">
    <property type="component" value="Chromosome"/>
</dbReference>
<dbReference type="GO" id="GO:0005886">
    <property type="term" value="C:plasma membrane"/>
    <property type="evidence" value="ECO:0007669"/>
    <property type="project" value="UniProtKB-SubCell"/>
</dbReference>
<dbReference type="GO" id="GO:0015194">
    <property type="term" value="F:L-serine transmembrane transporter activity"/>
    <property type="evidence" value="ECO:0007669"/>
    <property type="project" value="InterPro"/>
</dbReference>
<dbReference type="GO" id="GO:0015293">
    <property type="term" value="F:symporter activity"/>
    <property type="evidence" value="ECO:0007669"/>
    <property type="project" value="UniProtKB-UniRule"/>
</dbReference>
<dbReference type="GO" id="GO:0015565">
    <property type="term" value="F:threonine efflux transmembrane transporter activity"/>
    <property type="evidence" value="ECO:0007669"/>
    <property type="project" value="InterPro"/>
</dbReference>
<dbReference type="HAMAP" id="MF_01583">
    <property type="entry name" value="Thr_Ser_transp_TdcC"/>
    <property type="match status" value="1"/>
</dbReference>
<dbReference type="InterPro" id="IPR018227">
    <property type="entry name" value="Amino_acid_transport_2"/>
</dbReference>
<dbReference type="InterPro" id="IPR004694">
    <property type="entry name" value="Hydroxy_aa_transpt"/>
</dbReference>
<dbReference type="InterPro" id="IPR023726">
    <property type="entry name" value="Thr/Ser_transpt_TdcC"/>
</dbReference>
<dbReference type="NCBIfam" id="NF010152">
    <property type="entry name" value="PRK13629.1"/>
    <property type="match status" value="1"/>
</dbReference>
<dbReference type="NCBIfam" id="TIGR00814">
    <property type="entry name" value="stp"/>
    <property type="match status" value="1"/>
</dbReference>
<dbReference type="PANTHER" id="PTHR35334">
    <property type="entry name" value="SERINE TRANSPORTER"/>
    <property type="match status" value="1"/>
</dbReference>
<dbReference type="PANTHER" id="PTHR35334:SF1">
    <property type="entry name" value="THREONINE_SERINE TRANSPORTER TDCC"/>
    <property type="match status" value="1"/>
</dbReference>
<dbReference type="Pfam" id="PF03222">
    <property type="entry name" value="Trp_Tyr_perm"/>
    <property type="match status" value="1"/>
</dbReference>
<feature type="chain" id="PRO_0000309171" description="Threonine/serine transporter TdcC">
    <location>
        <begin position="1"/>
        <end position="443"/>
    </location>
</feature>
<feature type="transmembrane region" description="Helical" evidence="1">
    <location>
        <begin position="22"/>
        <end position="42"/>
    </location>
</feature>
<feature type="transmembrane region" description="Helical" evidence="1">
    <location>
        <begin position="44"/>
        <end position="64"/>
    </location>
</feature>
<feature type="transmembrane region" description="Helical" evidence="1">
    <location>
        <begin position="97"/>
        <end position="117"/>
    </location>
</feature>
<feature type="transmembrane region" description="Helical" evidence="1">
    <location>
        <begin position="140"/>
        <end position="160"/>
    </location>
</feature>
<feature type="transmembrane region" description="Helical" evidence="1">
    <location>
        <begin position="163"/>
        <end position="183"/>
    </location>
</feature>
<feature type="transmembrane region" description="Helical" evidence="1">
    <location>
        <begin position="207"/>
        <end position="227"/>
    </location>
</feature>
<feature type="transmembrane region" description="Helical" evidence="1">
    <location>
        <begin position="261"/>
        <end position="281"/>
    </location>
</feature>
<feature type="transmembrane region" description="Helical" evidence="1">
    <location>
        <begin position="311"/>
        <end position="331"/>
    </location>
</feature>
<feature type="transmembrane region" description="Helical" evidence="1">
    <location>
        <begin position="366"/>
        <end position="386"/>
    </location>
</feature>
<feature type="transmembrane region" description="Helical" evidence="1">
    <location>
        <begin position="389"/>
        <end position="409"/>
    </location>
</feature>
<feature type="transmembrane region" description="Helical" evidence="1">
    <location>
        <begin position="423"/>
        <end position="443"/>
    </location>
</feature>
<sequence>MSTSDSIVSSQTKQSSWRKSDTTWTLGLFGTAIGAGVLFFPIRAGFGGLIPILLMLVLAYPIAFYCHRALARLCLSGSNPSGNITETVEEHFGKTGGVVITFLYFFAICPLLWIYGVTITNTFMTFWENQLGFAPLNRGFVALFLLLLMAFVIWFGKDLMVKVMSYLVWPFIASLVLISLSLIPYWNSAVIDQVDLGSLSLTGHDGILITVWLGISIMVFSFNFSPIVSSFVVSKREEYEKDFGRDFTERKCSQIISRASMLMVAVVMFFAFSCLFTLSPANMAEAKAQNIPVLSYLANHFASMTGTKTTFAITLEYAASIIALVAIFKSFFGHYLGTLEGLNGLILKFGYKGDKTKVSLGKLNTISMIFIMGSTWVVAYANPNILDLIEAMGAPIIASLLCLLPMYAIRKAPSLAKYRGRLDNVFVTVIGLLTILNIVYKLF</sequence>
<organism>
    <name type="scientific">Shigella boydii serotype 4 (strain Sb227)</name>
    <dbReference type="NCBI Taxonomy" id="300268"/>
    <lineage>
        <taxon>Bacteria</taxon>
        <taxon>Pseudomonadati</taxon>
        <taxon>Pseudomonadota</taxon>
        <taxon>Gammaproteobacteria</taxon>
        <taxon>Enterobacterales</taxon>
        <taxon>Enterobacteriaceae</taxon>
        <taxon>Shigella</taxon>
    </lineage>
</organism>
<proteinExistence type="inferred from homology"/>